<accession>A6U8K4</accession>
<dbReference type="EC" id="2.7.4.22" evidence="1"/>
<dbReference type="EMBL" id="CP000738">
    <property type="protein sequence ID" value="ABR59984.1"/>
    <property type="molecule type" value="Genomic_DNA"/>
</dbReference>
<dbReference type="RefSeq" id="WP_011975303.1">
    <property type="nucleotide sequence ID" value="NC_009636.1"/>
</dbReference>
<dbReference type="RefSeq" id="YP_001326819.1">
    <property type="nucleotide sequence ID" value="NC_009636.1"/>
</dbReference>
<dbReference type="SMR" id="A6U8K4"/>
<dbReference type="STRING" id="366394.Smed_1133"/>
<dbReference type="GeneID" id="61612087"/>
<dbReference type="KEGG" id="smd:Smed_1133"/>
<dbReference type="PATRIC" id="fig|366394.8.peg.4258"/>
<dbReference type="eggNOG" id="COG0528">
    <property type="taxonomic scope" value="Bacteria"/>
</dbReference>
<dbReference type="HOGENOM" id="CLU_033861_0_0_5"/>
<dbReference type="OrthoDB" id="9807458at2"/>
<dbReference type="UniPathway" id="UPA00159">
    <property type="reaction ID" value="UER00275"/>
</dbReference>
<dbReference type="Proteomes" id="UP000001108">
    <property type="component" value="Chromosome"/>
</dbReference>
<dbReference type="GO" id="GO:0005829">
    <property type="term" value="C:cytosol"/>
    <property type="evidence" value="ECO:0007669"/>
    <property type="project" value="TreeGrafter"/>
</dbReference>
<dbReference type="GO" id="GO:0005524">
    <property type="term" value="F:ATP binding"/>
    <property type="evidence" value="ECO:0007669"/>
    <property type="project" value="UniProtKB-KW"/>
</dbReference>
<dbReference type="GO" id="GO:0033862">
    <property type="term" value="F:UMP kinase activity"/>
    <property type="evidence" value="ECO:0007669"/>
    <property type="project" value="UniProtKB-EC"/>
</dbReference>
<dbReference type="GO" id="GO:0044210">
    <property type="term" value="P:'de novo' CTP biosynthetic process"/>
    <property type="evidence" value="ECO:0007669"/>
    <property type="project" value="UniProtKB-UniRule"/>
</dbReference>
<dbReference type="GO" id="GO:0006225">
    <property type="term" value="P:UDP biosynthetic process"/>
    <property type="evidence" value="ECO:0007669"/>
    <property type="project" value="TreeGrafter"/>
</dbReference>
<dbReference type="CDD" id="cd04254">
    <property type="entry name" value="AAK_UMPK-PyrH-Ec"/>
    <property type="match status" value="1"/>
</dbReference>
<dbReference type="FunFam" id="3.40.1160.10:FF:000001">
    <property type="entry name" value="Uridylate kinase"/>
    <property type="match status" value="1"/>
</dbReference>
<dbReference type="Gene3D" id="3.40.1160.10">
    <property type="entry name" value="Acetylglutamate kinase-like"/>
    <property type="match status" value="1"/>
</dbReference>
<dbReference type="HAMAP" id="MF_01220_B">
    <property type="entry name" value="PyrH_B"/>
    <property type="match status" value="1"/>
</dbReference>
<dbReference type="InterPro" id="IPR036393">
    <property type="entry name" value="AceGlu_kinase-like_sf"/>
</dbReference>
<dbReference type="InterPro" id="IPR001048">
    <property type="entry name" value="Asp/Glu/Uridylate_kinase"/>
</dbReference>
<dbReference type="InterPro" id="IPR011817">
    <property type="entry name" value="Uridylate_kinase"/>
</dbReference>
<dbReference type="InterPro" id="IPR015963">
    <property type="entry name" value="Uridylate_kinase_bac"/>
</dbReference>
<dbReference type="NCBIfam" id="TIGR02075">
    <property type="entry name" value="pyrH_bact"/>
    <property type="match status" value="1"/>
</dbReference>
<dbReference type="PANTHER" id="PTHR42833">
    <property type="entry name" value="URIDYLATE KINASE"/>
    <property type="match status" value="1"/>
</dbReference>
<dbReference type="PANTHER" id="PTHR42833:SF4">
    <property type="entry name" value="URIDYLATE KINASE PUMPKIN, CHLOROPLASTIC"/>
    <property type="match status" value="1"/>
</dbReference>
<dbReference type="Pfam" id="PF00696">
    <property type="entry name" value="AA_kinase"/>
    <property type="match status" value="1"/>
</dbReference>
<dbReference type="PIRSF" id="PIRSF005650">
    <property type="entry name" value="Uridylate_kin"/>
    <property type="match status" value="1"/>
</dbReference>
<dbReference type="SUPFAM" id="SSF53633">
    <property type="entry name" value="Carbamate kinase-like"/>
    <property type="match status" value="1"/>
</dbReference>
<sequence>MSAQPIYKRVLLKASGEALMGSQGFGIDVAVADRIASDIAQARAMGVEVGVVVGGGNIFRGVAVASKGGDRVTGDHMGMLATVINALALATSLRKLDIDTVVLSAIAMPEICESFSQRATLYHLSLGRVVIFAGGTGNPFFTTDSAAALRAAEMGAEAIFKGTQVDGIYSADPKKDPSATRFDRLTHSEVLEKGLAVMDVAAVALARENAIPIVVFSIHEKDGFTEILTGGGRATIVTDS</sequence>
<keyword id="KW-0021">Allosteric enzyme</keyword>
<keyword id="KW-0067">ATP-binding</keyword>
<keyword id="KW-0963">Cytoplasm</keyword>
<keyword id="KW-0418">Kinase</keyword>
<keyword id="KW-0547">Nucleotide-binding</keyword>
<keyword id="KW-0665">Pyrimidine biosynthesis</keyword>
<keyword id="KW-0808">Transferase</keyword>
<feature type="chain" id="PRO_1000054020" description="Uridylate kinase">
    <location>
        <begin position="1"/>
        <end position="240"/>
    </location>
</feature>
<feature type="region of interest" description="Involved in allosteric activation by GTP" evidence="1">
    <location>
        <begin position="21"/>
        <end position="26"/>
    </location>
</feature>
<feature type="binding site" evidence="1">
    <location>
        <begin position="13"/>
        <end position="16"/>
    </location>
    <ligand>
        <name>ATP</name>
        <dbReference type="ChEBI" id="CHEBI:30616"/>
    </ligand>
</feature>
<feature type="binding site" evidence="1">
    <location>
        <position position="55"/>
    </location>
    <ligand>
        <name>UMP</name>
        <dbReference type="ChEBI" id="CHEBI:57865"/>
    </ligand>
</feature>
<feature type="binding site" evidence="1">
    <location>
        <position position="56"/>
    </location>
    <ligand>
        <name>ATP</name>
        <dbReference type="ChEBI" id="CHEBI:30616"/>
    </ligand>
</feature>
<feature type="binding site" evidence="1">
    <location>
        <position position="60"/>
    </location>
    <ligand>
        <name>ATP</name>
        <dbReference type="ChEBI" id="CHEBI:30616"/>
    </ligand>
</feature>
<feature type="binding site" evidence="1">
    <location>
        <position position="75"/>
    </location>
    <ligand>
        <name>UMP</name>
        <dbReference type="ChEBI" id="CHEBI:57865"/>
    </ligand>
</feature>
<feature type="binding site" evidence="1">
    <location>
        <begin position="136"/>
        <end position="143"/>
    </location>
    <ligand>
        <name>UMP</name>
        <dbReference type="ChEBI" id="CHEBI:57865"/>
    </ligand>
</feature>
<feature type="binding site" evidence="1">
    <location>
        <position position="163"/>
    </location>
    <ligand>
        <name>ATP</name>
        <dbReference type="ChEBI" id="CHEBI:30616"/>
    </ligand>
</feature>
<feature type="binding site" evidence="1">
    <location>
        <position position="164"/>
    </location>
    <ligand>
        <name>ATP</name>
        <dbReference type="ChEBI" id="CHEBI:30616"/>
    </ligand>
</feature>
<feature type="binding site" evidence="1">
    <location>
        <position position="169"/>
    </location>
    <ligand>
        <name>ATP</name>
        <dbReference type="ChEBI" id="CHEBI:30616"/>
    </ligand>
</feature>
<feature type="binding site" evidence="1">
    <location>
        <position position="172"/>
    </location>
    <ligand>
        <name>ATP</name>
        <dbReference type="ChEBI" id="CHEBI:30616"/>
    </ligand>
</feature>
<gene>
    <name evidence="1" type="primary">pyrH</name>
    <name type="ordered locus">Smed_1133</name>
</gene>
<comment type="function">
    <text evidence="1">Catalyzes the reversible phosphorylation of UMP to UDP.</text>
</comment>
<comment type="catalytic activity">
    <reaction evidence="1">
        <text>UMP + ATP = UDP + ADP</text>
        <dbReference type="Rhea" id="RHEA:24400"/>
        <dbReference type="ChEBI" id="CHEBI:30616"/>
        <dbReference type="ChEBI" id="CHEBI:57865"/>
        <dbReference type="ChEBI" id="CHEBI:58223"/>
        <dbReference type="ChEBI" id="CHEBI:456216"/>
        <dbReference type="EC" id="2.7.4.22"/>
    </reaction>
</comment>
<comment type="activity regulation">
    <text evidence="1">Allosterically activated by GTP. Inhibited by UTP.</text>
</comment>
<comment type="pathway">
    <text evidence="1">Pyrimidine metabolism; CTP biosynthesis via de novo pathway; UDP from UMP (UMPK route): step 1/1.</text>
</comment>
<comment type="subunit">
    <text evidence="1">Homohexamer.</text>
</comment>
<comment type="subcellular location">
    <subcellularLocation>
        <location evidence="1">Cytoplasm</location>
    </subcellularLocation>
</comment>
<comment type="similarity">
    <text evidence="1">Belongs to the UMP kinase family.</text>
</comment>
<protein>
    <recommendedName>
        <fullName evidence="1">Uridylate kinase</fullName>
        <shortName evidence="1">UK</shortName>
        <ecNumber evidence="1">2.7.4.22</ecNumber>
    </recommendedName>
    <alternativeName>
        <fullName evidence="1">Uridine monophosphate kinase</fullName>
        <shortName evidence="1">UMP kinase</shortName>
        <shortName evidence="1">UMPK</shortName>
    </alternativeName>
</protein>
<name>PYRH_SINMW</name>
<reference key="1">
    <citation type="submission" date="2007-06" db="EMBL/GenBank/DDBJ databases">
        <title>Complete sequence of Sinorhizobium medicae WSM419 chromosome.</title>
        <authorList>
            <consortium name="US DOE Joint Genome Institute"/>
            <person name="Copeland A."/>
            <person name="Lucas S."/>
            <person name="Lapidus A."/>
            <person name="Barry K."/>
            <person name="Glavina del Rio T."/>
            <person name="Dalin E."/>
            <person name="Tice H."/>
            <person name="Pitluck S."/>
            <person name="Chain P."/>
            <person name="Malfatti S."/>
            <person name="Shin M."/>
            <person name="Vergez L."/>
            <person name="Schmutz J."/>
            <person name="Larimer F."/>
            <person name="Land M."/>
            <person name="Hauser L."/>
            <person name="Kyrpides N."/>
            <person name="Mikhailova N."/>
            <person name="Reeve W.G."/>
            <person name="Richardson P."/>
        </authorList>
    </citation>
    <scope>NUCLEOTIDE SEQUENCE [LARGE SCALE GENOMIC DNA]</scope>
    <source>
        <strain>WSM419</strain>
    </source>
</reference>
<evidence type="ECO:0000255" key="1">
    <source>
        <dbReference type="HAMAP-Rule" id="MF_01220"/>
    </source>
</evidence>
<proteinExistence type="inferred from homology"/>
<organism>
    <name type="scientific">Sinorhizobium medicae (strain WSM419)</name>
    <name type="common">Ensifer medicae</name>
    <dbReference type="NCBI Taxonomy" id="366394"/>
    <lineage>
        <taxon>Bacteria</taxon>
        <taxon>Pseudomonadati</taxon>
        <taxon>Pseudomonadota</taxon>
        <taxon>Alphaproteobacteria</taxon>
        <taxon>Hyphomicrobiales</taxon>
        <taxon>Rhizobiaceae</taxon>
        <taxon>Sinorhizobium/Ensifer group</taxon>
        <taxon>Sinorhizobium</taxon>
    </lineage>
</organism>